<name>Y465_CARHZ</name>
<organism>
    <name type="scientific">Carboxydothermus hydrogenoformans (strain ATCC BAA-161 / DSM 6008 / Z-2901)</name>
    <dbReference type="NCBI Taxonomy" id="246194"/>
    <lineage>
        <taxon>Bacteria</taxon>
        <taxon>Bacillati</taxon>
        <taxon>Bacillota</taxon>
        <taxon>Clostridia</taxon>
        <taxon>Thermoanaerobacterales</taxon>
        <taxon>Thermoanaerobacteraceae</taxon>
        <taxon>Carboxydothermus</taxon>
    </lineage>
</organism>
<dbReference type="EMBL" id="CP000141">
    <property type="protein sequence ID" value="ABB13898.1"/>
    <property type="molecule type" value="Genomic_DNA"/>
</dbReference>
<dbReference type="RefSeq" id="WP_011343399.1">
    <property type="nucleotide sequence ID" value="NC_007503.1"/>
</dbReference>
<dbReference type="SMR" id="Q3AEW1"/>
<dbReference type="STRING" id="246194.CHY_0465"/>
<dbReference type="KEGG" id="chy:CHY_0465"/>
<dbReference type="eggNOG" id="COG0393">
    <property type="taxonomic scope" value="Bacteria"/>
</dbReference>
<dbReference type="HOGENOM" id="CLU_117144_3_2_9"/>
<dbReference type="InParanoid" id="Q3AEW1"/>
<dbReference type="OrthoDB" id="9796448at2"/>
<dbReference type="Proteomes" id="UP000002706">
    <property type="component" value="Chromosome"/>
</dbReference>
<dbReference type="Gene3D" id="3.30.110.70">
    <property type="entry name" value="Hypothetical protein apc22750. Chain B"/>
    <property type="match status" value="1"/>
</dbReference>
<dbReference type="HAMAP" id="MF_00338">
    <property type="entry name" value="UPF0145"/>
    <property type="match status" value="1"/>
</dbReference>
<dbReference type="InterPro" id="IPR035439">
    <property type="entry name" value="UPF0145_dom_sf"/>
</dbReference>
<dbReference type="InterPro" id="IPR002765">
    <property type="entry name" value="UPF0145_YbjQ-like"/>
</dbReference>
<dbReference type="PANTHER" id="PTHR34068">
    <property type="entry name" value="UPF0145 PROTEIN YBJQ"/>
    <property type="match status" value="1"/>
</dbReference>
<dbReference type="PANTHER" id="PTHR34068:SF1">
    <property type="entry name" value="UPF0145 PROTEIN YBJQ"/>
    <property type="match status" value="1"/>
</dbReference>
<dbReference type="Pfam" id="PF01906">
    <property type="entry name" value="YbjQ_1"/>
    <property type="match status" value="1"/>
</dbReference>
<dbReference type="SUPFAM" id="SSF117782">
    <property type="entry name" value="YbjQ-like"/>
    <property type="match status" value="1"/>
</dbReference>
<protein>
    <recommendedName>
        <fullName evidence="1">UPF0145 protein CHY_0465</fullName>
    </recommendedName>
</protein>
<accession>Q3AEW1</accession>
<gene>
    <name type="ordered locus">CHY_0465</name>
</gene>
<keyword id="KW-1185">Reference proteome</keyword>
<reference key="1">
    <citation type="journal article" date="2005" name="PLoS Genet.">
        <title>Life in hot carbon monoxide: the complete genome sequence of Carboxydothermus hydrogenoformans Z-2901.</title>
        <authorList>
            <person name="Wu M."/>
            <person name="Ren Q."/>
            <person name="Durkin A.S."/>
            <person name="Daugherty S.C."/>
            <person name="Brinkac L.M."/>
            <person name="Dodson R.J."/>
            <person name="Madupu R."/>
            <person name="Sullivan S.A."/>
            <person name="Kolonay J.F."/>
            <person name="Nelson W.C."/>
            <person name="Tallon L.J."/>
            <person name="Jones K.M."/>
            <person name="Ulrich L.E."/>
            <person name="Gonzalez J.M."/>
            <person name="Zhulin I.B."/>
            <person name="Robb F.T."/>
            <person name="Eisen J.A."/>
        </authorList>
    </citation>
    <scope>NUCLEOTIDE SEQUENCE [LARGE SCALE GENOMIC DNA]</scope>
    <source>
        <strain>ATCC BAA-161 / DSM 6008 / Z-2901</strain>
    </source>
</reference>
<proteinExistence type="inferred from homology"/>
<sequence length="107" mass="11502">MLLATSGRLDGFKVTKYLGIVTGEAIMGTNFIRDLLASISDIIGGRSGAYEQQLEEARNIVLNEMSERAKRLGANAVIGISLDYESVGQSMLMVVATGTAVYIEPEM</sequence>
<feature type="chain" id="PRO_0000225819" description="UPF0145 protein CHY_0465">
    <location>
        <begin position="1"/>
        <end position="107"/>
    </location>
</feature>
<comment type="similarity">
    <text evidence="1">Belongs to the UPF0145 family.</text>
</comment>
<evidence type="ECO:0000255" key="1">
    <source>
        <dbReference type="HAMAP-Rule" id="MF_00338"/>
    </source>
</evidence>